<comment type="function">
    <text evidence="3">Transcription factor involved in abiotic stress responses. Plays a regulatory role in tolerance to salt, cold, and drought stresses. Positively regulates the expression of genes involved in proline synthesis and transport, and genes involved in reactive oxygen species (ROS) scavenging such as peroxidase, superoxide dismutase and catalase during salt stress. Transactivates stress-related genes, including LEA3, RAB16A and DREB2A during salt stress.</text>
</comment>
<comment type="subcellular location">
    <subcellularLocation>
        <location evidence="3">Nucleus</location>
    </subcellularLocation>
</comment>
<comment type="tissue specificity">
    <text evidence="3">Highly expressed in leaves. Expressed in roots and shoots. Expressed at low levels in flowers.</text>
</comment>
<comment type="induction">
    <text evidence="3">Induced by salt, cold and osmotic stresses, and abscisic acid (ABA). Down-regulated by salicylic acid (SA).</text>
</comment>
<comment type="miscellaneous">
    <text evidence="3">Plants over-expressing MYB2 show increased tolerance to salt, cold, and drought stresses, and increased sensitivity to abscisic acid (ABA).</text>
</comment>
<protein>
    <recommendedName>
        <fullName evidence="5">Transcription factor MYB2</fullName>
    </recommendedName>
    <alternativeName>
        <fullName evidence="5">Myb-related protein 2</fullName>
        <shortName evidence="4">OsMYB2</shortName>
    </alternativeName>
</protein>
<evidence type="ECO:0000255" key="1">
    <source>
        <dbReference type="PROSITE-ProRule" id="PRU00625"/>
    </source>
</evidence>
<evidence type="ECO:0000256" key="2">
    <source>
        <dbReference type="SAM" id="MobiDB-lite"/>
    </source>
</evidence>
<evidence type="ECO:0000269" key="3">
    <source>
    </source>
</evidence>
<evidence type="ECO:0000303" key="4">
    <source>
    </source>
</evidence>
<evidence type="ECO:0000305" key="5"/>
<evidence type="ECO:0000312" key="6">
    <source>
        <dbReference type="EMBL" id="ABF95617.1"/>
    </source>
</evidence>
<evidence type="ECO:0000312" key="7">
    <source>
        <dbReference type="EMBL" id="BAF11851.1"/>
    </source>
</evidence>
<gene>
    <name evidence="4" type="primary">MYB2</name>
    <name evidence="7" type="ordered locus">Os03g0315400</name>
    <name evidence="6" type="ordered locus">LOC_Os03g20090</name>
</gene>
<organism evidence="6">
    <name type="scientific">Oryza sativa subsp. japonica</name>
    <name type="common">Rice</name>
    <dbReference type="NCBI Taxonomy" id="39947"/>
    <lineage>
        <taxon>Eukaryota</taxon>
        <taxon>Viridiplantae</taxon>
        <taxon>Streptophyta</taxon>
        <taxon>Embryophyta</taxon>
        <taxon>Tracheophyta</taxon>
        <taxon>Spermatophyta</taxon>
        <taxon>Magnoliopsida</taxon>
        <taxon>Liliopsida</taxon>
        <taxon>Poales</taxon>
        <taxon>Poaceae</taxon>
        <taxon>BOP clade</taxon>
        <taxon>Oryzoideae</taxon>
        <taxon>Oryzeae</taxon>
        <taxon>Oryzinae</taxon>
        <taxon>Oryza</taxon>
        <taxon>Oryza sativa</taxon>
    </lineage>
</organism>
<accession>Q10MB4</accession>
<keyword id="KW-0238">DNA-binding</keyword>
<keyword id="KW-0539">Nucleus</keyword>
<keyword id="KW-1185">Reference proteome</keyword>
<keyword id="KW-0677">Repeat</keyword>
<keyword id="KW-0346">Stress response</keyword>
<keyword id="KW-0804">Transcription</keyword>
<keyword id="KW-0805">Transcription regulation</keyword>
<feature type="chain" id="PRO_0000439823" description="Transcription factor MYB2">
    <location>
        <begin position="1"/>
        <end position="329"/>
    </location>
</feature>
<feature type="domain" description="HTH myb-type 1" evidence="1">
    <location>
        <begin position="17"/>
        <end position="69"/>
    </location>
</feature>
<feature type="domain" description="HTH myb-type 2" evidence="1">
    <location>
        <begin position="70"/>
        <end position="124"/>
    </location>
</feature>
<feature type="DNA-binding region" description="H-T-H motif" evidence="1">
    <location>
        <begin position="45"/>
        <end position="69"/>
    </location>
</feature>
<feature type="DNA-binding region" description="H-T-H motif" evidence="1">
    <location>
        <begin position="97"/>
        <end position="120"/>
    </location>
</feature>
<feature type="region of interest" description="Disordered" evidence="2">
    <location>
        <begin position="155"/>
        <end position="189"/>
    </location>
</feature>
<feature type="region of interest" description="Disordered" evidence="2">
    <location>
        <begin position="206"/>
        <end position="242"/>
    </location>
</feature>
<feature type="compositionally biased region" description="Low complexity" evidence="2">
    <location>
        <begin position="155"/>
        <end position="166"/>
    </location>
</feature>
<feature type="compositionally biased region" description="Low complexity" evidence="2">
    <location>
        <begin position="217"/>
        <end position="235"/>
    </location>
</feature>
<dbReference type="EMBL" id="DP000009">
    <property type="protein sequence ID" value="ABF95617.1"/>
    <property type="molecule type" value="Genomic_DNA"/>
</dbReference>
<dbReference type="EMBL" id="AP008209">
    <property type="protein sequence ID" value="BAF11851.1"/>
    <property type="molecule type" value="Genomic_DNA"/>
</dbReference>
<dbReference type="EMBL" id="AP014959">
    <property type="protein sequence ID" value="BAS83901.1"/>
    <property type="molecule type" value="Genomic_DNA"/>
</dbReference>
<dbReference type="EMBL" id="AK120551">
    <property type="protein sequence ID" value="BAH00067.1"/>
    <property type="molecule type" value="mRNA"/>
</dbReference>
<dbReference type="RefSeq" id="XP_015628446.1">
    <property type="nucleotide sequence ID" value="XM_015772960.1"/>
</dbReference>
<dbReference type="SMR" id="Q10MB4"/>
<dbReference type="FunCoup" id="Q10MB4">
    <property type="interactions" value="47"/>
</dbReference>
<dbReference type="STRING" id="39947.Q10MB4"/>
<dbReference type="PaxDb" id="39947-Q10MB4"/>
<dbReference type="EnsemblPlants" id="Os03t0315400-01">
    <property type="protein sequence ID" value="Os03t0315400-01"/>
    <property type="gene ID" value="Os03g0315400"/>
</dbReference>
<dbReference type="Gramene" id="Os03t0315400-01">
    <property type="protein sequence ID" value="Os03t0315400-01"/>
    <property type="gene ID" value="Os03g0315400"/>
</dbReference>
<dbReference type="KEGG" id="dosa:Os03g0315400"/>
<dbReference type="eggNOG" id="KOG0048">
    <property type="taxonomic scope" value="Eukaryota"/>
</dbReference>
<dbReference type="HOGENOM" id="CLU_028567_8_1_1"/>
<dbReference type="InParanoid" id="Q10MB4"/>
<dbReference type="OMA" id="SCWPAEY"/>
<dbReference type="OrthoDB" id="2143914at2759"/>
<dbReference type="PlantReactome" id="R-OSA-9826782">
    <property type="pathway name" value="Regulation of seed germination and coleoptile growth under submergence and normal gravity environment"/>
</dbReference>
<dbReference type="Proteomes" id="UP000000763">
    <property type="component" value="Chromosome 3"/>
</dbReference>
<dbReference type="Proteomes" id="UP000059680">
    <property type="component" value="Chromosome 3"/>
</dbReference>
<dbReference type="GO" id="GO:0005634">
    <property type="term" value="C:nucleus"/>
    <property type="evidence" value="ECO:0000314"/>
    <property type="project" value="UniProtKB"/>
</dbReference>
<dbReference type="GO" id="GO:0003700">
    <property type="term" value="F:DNA-binding transcription factor activity"/>
    <property type="evidence" value="ECO:0007669"/>
    <property type="project" value="InterPro"/>
</dbReference>
<dbReference type="GO" id="GO:0043565">
    <property type="term" value="F:sequence-specific DNA binding"/>
    <property type="evidence" value="ECO:0000318"/>
    <property type="project" value="GO_Central"/>
</dbReference>
<dbReference type="GO" id="GO:0045893">
    <property type="term" value="P:positive regulation of DNA-templated transcription"/>
    <property type="evidence" value="ECO:0000314"/>
    <property type="project" value="UniProtKB"/>
</dbReference>
<dbReference type="GO" id="GO:1901002">
    <property type="term" value="P:positive regulation of response to salt stress"/>
    <property type="evidence" value="ECO:0000315"/>
    <property type="project" value="UniProtKB"/>
</dbReference>
<dbReference type="GO" id="GO:1902584">
    <property type="term" value="P:positive regulation of response to water deprivation"/>
    <property type="evidence" value="ECO:0000315"/>
    <property type="project" value="UniProtKB"/>
</dbReference>
<dbReference type="GO" id="GO:0006355">
    <property type="term" value="P:regulation of DNA-templated transcription"/>
    <property type="evidence" value="ECO:0000318"/>
    <property type="project" value="GO_Central"/>
</dbReference>
<dbReference type="GO" id="GO:0009409">
    <property type="term" value="P:response to cold"/>
    <property type="evidence" value="ECO:0000315"/>
    <property type="project" value="UniProtKB"/>
</dbReference>
<dbReference type="CDD" id="cd00167">
    <property type="entry name" value="SANT"/>
    <property type="match status" value="2"/>
</dbReference>
<dbReference type="FunFam" id="1.10.10.60:FF:000107">
    <property type="entry name" value="MYB transcription factor"/>
    <property type="match status" value="1"/>
</dbReference>
<dbReference type="FunFam" id="1.10.10.60:FF:000011">
    <property type="entry name" value="Myb transcription factor"/>
    <property type="match status" value="1"/>
</dbReference>
<dbReference type="Gene3D" id="1.10.10.60">
    <property type="entry name" value="Homeodomain-like"/>
    <property type="match status" value="2"/>
</dbReference>
<dbReference type="InterPro" id="IPR044676">
    <property type="entry name" value="EOBI/EOBII-like_plant"/>
</dbReference>
<dbReference type="InterPro" id="IPR009057">
    <property type="entry name" value="Homeodomain-like_sf"/>
</dbReference>
<dbReference type="InterPro" id="IPR017930">
    <property type="entry name" value="Myb_dom"/>
</dbReference>
<dbReference type="InterPro" id="IPR001005">
    <property type="entry name" value="SANT/Myb"/>
</dbReference>
<dbReference type="PANTHER" id="PTHR45675:SF1">
    <property type="entry name" value="MYB TRANSCRIPTION FACTOR-RELATED"/>
    <property type="match status" value="1"/>
</dbReference>
<dbReference type="PANTHER" id="PTHR45675">
    <property type="entry name" value="MYB TRANSCRIPTION FACTOR-RELATED-RELATED"/>
    <property type="match status" value="1"/>
</dbReference>
<dbReference type="Pfam" id="PF00249">
    <property type="entry name" value="Myb_DNA-binding"/>
    <property type="match status" value="2"/>
</dbReference>
<dbReference type="SMART" id="SM00717">
    <property type="entry name" value="SANT"/>
    <property type="match status" value="2"/>
</dbReference>
<dbReference type="SUPFAM" id="SSF46689">
    <property type="entry name" value="Homeodomain-like"/>
    <property type="match status" value="1"/>
</dbReference>
<dbReference type="PROSITE" id="PS51294">
    <property type="entry name" value="HTH_MYB"/>
    <property type="match status" value="2"/>
</dbReference>
<proteinExistence type="evidence at transcript level"/>
<reference key="1">
    <citation type="journal article" date="2005" name="Genome Res.">
        <title>Sequence, annotation, and analysis of synteny between rice chromosome 3 and diverged grass species.</title>
        <authorList>
            <consortium name="The rice chromosome 3 sequencing consortium"/>
            <person name="Buell C.R."/>
            <person name="Yuan Q."/>
            <person name="Ouyang S."/>
            <person name="Liu J."/>
            <person name="Zhu W."/>
            <person name="Wang A."/>
            <person name="Maiti R."/>
            <person name="Haas B."/>
            <person name="Wortman J."/>
            <person name="Pertea M."/>
            <person name="Jones K.M."/>
            <person name="Kim M."/>
            <person name="Overton L."/>
            <person name="Tsitrin T."/>
            <person name="Fadrosh D."/>
            <person name="Bera J."/>
            <person name="Weaver B."/>
            <person name="Jin S."/>
            <person name="Johri S."/>
            <person name="Reardon M."/>
            <person name="Webb K."/>
            <person name="Hill J."/>
            <person name="Moffat K."/>
            <person name="Tallon L."/>
            <person name="Van Aken S."/>
            <person name="Lewis M."/>
            <person name="Utterback T."/>
            <person name="Feldblyum T."/>
            <person name="Zismann V."/>
            <person name="Iobst S."/>
            <person name="Hsiao J."/>
            <person name="de Vazeille A.R."/>
            <person name="Salzberg S.L."/>
            <person name="White O."/>
            <person name="Fraser C.M."/>
            <person name="Yu Y."/>
            <person name="Kim H."/>
            <person name="Rambo T."/>
            <person name="Currie J."/>
            <person name="Collura K."/>
            <person name="Kernodle-Thompson S."/>
            <person name="Wei F."/>
            <person name="Kudrna K."/>
            <person name="Ammiraju J.S.S."/>
            <person name="Luo M."/>
            <person name="Goicoechea J.L."/>
            <person name="Wing R.A."/>
            <person name="Henry D."/>
            <person name="Oates R."/>
            <person name="Palmer M."/>
            <person name="Pries G."/>
            <person name="Saski C."/>
            <person name="Simmons J."/>
            <person name="Soderlund C."/>
            <person name="Nelson W."/>
            <person name="de la Bastide M."/>
            <person name="Spiegel L."/>
            <person name="Nascimento L."/>
            <person name="Huang E."/>
            <person name="Preston R."/>
            <person name="Zutavern T."/>
            <person name="Palmer L."/>
            <person name="O'Shaughnessy A."/>
            <person name="Dike S."/>
            <person name="McCombie W.R."/>
            <person name="Minx P."/>
            <person name="Cordum H."/>
            <person name="Wilson R."/>
            <person name="Jin W."/>
            <person name="Lee H.R."/>
            <person name="Jiang J."/>
            <person name="Jackson S."/>
        </authorList>
    </citation>
    <scope>NUCLEOTIDE SEQUENCE [LARGE SCALE GENOMIC DNA]</scope>
    <source>
        <strain>cv. Nipponbare</strain>
    </source>
</reference>
<reference key="2">
    <citation type="journal article" date="2005" name="Nature">
        <title>The map-based sequence of the rice genome.</title>
        <authorList>
            <consortium name="International rice genome sequencing project (IRGSP)"/>
        </authorList>
    </citation>
    <scope>NUCLEOTIDE SEQUENCE [LARGE SCALE GENOMIC DNA]</scope>
    <source>
        <strain>cv. Nipponbare</strain>
    </source>
</reference>
<reference key="3">
    <citation type="journal article" date="2008" name="Nucleic Acids Res.">
        <title>The rice annotation project database (RAP-DB): 2008 update.</title>
        <authorList>
            <consortium name="The rice annotation project (RAP)"/>
        </authorList>
    </citation>
    <scope>GENOME REANNOTATION</scope>
    <source>
        <strain>cv. Nipponbare</strain>
    </source>
</reference>
<reference key="4">
    <citation type="journal article" date="2013" name="Rice">
        <title>Improvement of the Oryza sativa Nipponbare reference genome using next generation sequence and optical map data.</title>
        <authorList>
            <person name="Kawahara Y."/>
            <person name="de la Bastide M."/>
            <person name="Hamilton J.P."/>
            <person name="Kanamori H."/>
            <person name="McCombie W.R."/>
            <person name="Ouyang S."/>
            <person name="Schwartz D.C."/>
            <person name="Tanaka T."/>
            <person name="Wu J."/>
            <person name="Zhou S."/>
            <person name="Childs K.L."/>
            <person name="Davidson R.M."/>
            <person name="Lin H."/>
            <person name="Quesada-Ocampo L."/>
            <person name="Vaillancourt B."/>
            <person name="Sakai H."/>
            <person name="Lee S.S."/>
            <person name="Kim J."/>
            <person name="Numa H."/>
            <person name="Itoh T."/>
            <person name="Buell C.R."/>
            <person name="Matsumoto T."/>
        </authorList>
    </citation>
    <scope>GENOME REANNOTATION</scope>
    <source>
        <strain>cv. Nipponbare</strain>
    </source>
</reference>
<reference key="5">
    <citation type="journal article" date="2003" name="Science">
        <title>Collection, mapping, and annotation of over 28,000 cDNA clones from japonica rice.</title>
        <authorList>
            <consortium name="The rice full-length cDNA consortium"/>
        </authorList>
    </citation>
    <scope>NUCLEOTIDE SEQUENCE [LARGE SCALE MRNA]</scope>
    <source>
        <strain>cv. Nipponbare</strain>
    </source>
</reference>
<reference key="6">
    <citation type="journal article" date="2012" name="J. Exp. Bot.">
        <title>A R2R3-type MYB gene, OsMYB2, is involved in salt, cold, and dehydration tolerance in rice.</title>
        <authorList>
            <person name="Yang A."/>
            <person name="Dai X."/>
            <person name="Zhang W.H."/>
        </authorList>
    </citation>
    <scope>FUNCTION</scope>
    <scope>SUBCELLULAR LOCATION</scope>
    <scope>TISSUE SPECIFICITY</scope>
    <scope>INDUCTION</scope>
</reference>
<sequence>MDMAHERDASSEEEVMGGDLRRGPWTVEEDLLLVNYIAAHGEGRWNSLARSAGLKRTGKSCRLRWLNYLRPDLRRGNITPQEQLLILELHSRWGNRWSKIAQHLPGRTDNEIKNYWRTRVQKHAKQLKCDVNSQQFKDVMRYLWMPRLVERIQAAAAGQQQQQEGGTDTPPLSWQHGGSDGLYESPELPAPDASCWPAEYCAAAGGAQSGGTPAPELSSTTAGSSSLSTDSGAGAQPSWPTQADGAEWFTTACDASSATGGVAMRDTELELAQPPCQGGQTWTTSESSLPGLTFPDLAVADFEIGGFDVDSFWTSMEDDQLWCPTQAAV</sequence>
<name>MYB2_ORYSJ</name>